<protein>
    <recommendedName>
        <fullName evidence="2">Formamidopyrimidine-DNA glycosylase</fullName>
        <shortName evidence="2">Fapy-DNA glycosylase</shortName>
        <ecNumber evidence="2">3.2.2.23</ecNumber>
    </recommendedName>
    <alternativeName>
        <fullName evidence="2">DNA-(apurinic or apyrimidinic site) lyase MutM</fullName>
        <shortName evidence="2">AP lyase MutM</shortName>
        <ecNumber evidence="2">4.2.99.18</ecNumber>
    </alternativeName>
</protein>
<proteinExistence type="inferred from homology"/>
<sequence length="284" mass="31563">MPELPEVETVRRGLEPVMTGQRIIEADIRRPDLRWPLPANMQTRLEGKRILRLARRSKYILAELDSGETLIIHLGMSGRILIHGGQAPGAFHHALPSLEKHDHVVLDFDTGARVVFNDARRFGAMDLCETTEIDQHPMLATLGPEPLGNAFHEAYLTTRLKGRMTPIKSALLDQKVVAGLGNIYVCEALFQAGISPLRKAGRVSETRIASLVPIIRTVLGDAIEAGGSSLRDYRQTDGDLGYFQHRFRVYDRENAPCVTAGCPDVVRRVVQSGRSSFYCPSCQR</sequence>
<dbReference type="EC" id="3.2.2.23" evidence="2"/>
<dbReference type="EC" id="4.2.99.18" evidence="2"/>
<dbReference type="EMBL" id="CP000830">
    <property type="protein sequence ID" value="ABV95102.1"/>
    <property type="molecule type" value="Genomic_DNA"/>
</dbReference>
<dbReference type="RefSeq" id="WP_012180028.1">
    <property type="nucleotide sequence ID" value="NC_009952.1"/>
</dbReference>
<dbReference type="SMR" id="A8LNK8"/>
<dbReference type="STRING" id="398580.Dshi_3369"/>
<dbReference type="KEGG" id="dsh:Dshi_3369"/>
<dbReference type="eggNOG" id="COG0266">
    <property type="taxonomic scope" value="Bacteria"/>
</dbReference>
<dbReference type="HOGENOM" id="CLU_038423_1_1_5"/>
<dbReference type="OrthoDB" id="9800855at2"/>
<dbReference type="Proteomes" id="UP000006833">
    <property type="component" value="Chromosome"/>
</dbReference>
<dbReference type="GO" id="GO:0034039">
    <property type="term" value="F:8-oxo-7,8-dihydroguanine DNA N-glycosylase activity"/>
    <property type="evidence" value="ECO:0007669"/>
    <property type="project" value="TreeGrafter"/>
</dbReference>
<dbReference type="GO" id="GO:0140078">
    <property type="term" value="F:class I DNA-(apurinic or apyrimidinic site) endonuclease activity"/>
    <property type="evidence" value="ECO:0007669"/>
    <property type="project" value="UniProtKB-EC"/>
</dbReference>
<dbReference type="GO" id="GO:0003684">
    <property type="term" value="F:damaged DNA binding"/>
    <property type="evidence" value="ECO:0007669"/>
    <property type="project" value="InterPro"/>
</dbReference>
<dbReference type="GO" id="GO:0008270">
    <property type="term" value="F:zinc ion binding"/>
    <property type="evidence" value="ECO:0007669"/>
    <property type="project" value="UniProtKB-UniRule"/>
</dbReference>
<dbReference type="GO" id="GO:0006284">
    <property type="term" value="P:base-excision repair"/>
    <property type="evidence" value="ECO:0007669"/>
    <property type="project" value="InterPro"/>
</dbReference>
<dbReference type="CDD" id="cd08966">
    <property type="entry name" value="EcFpg-like_N"/>
    <property type="match status" value="1"/>
</dbReference>
<dbReference type="FunFam" id="1.10.8.50:FF:000003">
    <property type="entry name" value="Formamidopyrimidine-DNA glycosylase"/>
    <property type="match status" value="1"/>
</dbReference>
<dbReference type="FunFam" id="3.20.190.10:FF:000001">
    <property type="entry name" value="Formamidopyrimidine-DNA glycosylase"/>
    <property type="match status" value="1"/>
</dbReference>
<dbReference type="Gene3D" id="1.10.8.50">
    <property type="match status" value="1"/>
</dbReference>
<dbReference type="Gene3D" id="3.20.190.10">
    <property type="entry name" value="MutM-like, N-terminal"/>
    <property type="match status" value="1"/>
</dbReference>
<dbReference type="HAMAP" id="MF_00103">
    <property type="entry name" value="Fapy_DNA_glycosyl"/>
    <property type="match status" value="1"/>
</dbReference>
<dbReference type="InterPro" id="IPR015886">
    <property type="entry name" value="DNA_glyclase/AP_lyase_DNA-bd"/>
</dbReference>
<dbReference type="InterPro" id="IPR020629">
    <property type="entry name" value="Formamido-pyr_DNA_Glyclase"/>
</dbReference>
<dbReference type="InterPro" id="IPR012319">
    <property type="entry name" value="FPG_cat"/>
</dbReference>
<dbReference type="InterPro" id="IPR035937">
    <property type="entry name" value="MutM-like_N-ter"/>
</dbReference>
<dbReference type="InterPro" id="IPR010979">
    <property type="entry name" value="Ribosomal_uS13-like_H2TH"/>
</dbReference>
<dbReference type="InterPro" id="IPR000214">
    <property type="entry name" value="Znf_DNA_glyclase/AP_lyase"/>
</dbReference>
<dbReference type="NCBIfam" id="TIGR00577">
    <property type="entry name" value="fpg"/>
    <property type="match status" value="1"/>
</dbReference>
<dbReference type="NCBIfam" id="NF002211">
    <property type="entry name" value="PRK01103.1"/>
    <property type="match status" value="1"/>
</dbReference>
<dbReference type="PANTHER" id="PTHR22993">
    <property type="entry name" value="FORMAMIDOPYRIMIDINE-DNA GLYCOSYLASE"/>
    <property type="match status" value="1"/>
</dbReference>
<dbReference type="PANTHER" id="PTHR22993:SF9">
    <property type="entry name" value="FORMAMIDOPYRIMIDINE-DNA GLYCOSYLASE"/>
    <property type="match status" value="1"/>
</dbReference>
<dbReference type="Pfam" id="PF01149">
    <property type="entry name" value="Fapy_DNA_glyco"/>
    <property type="match status" value="1"/>
</dbReference>
<dbReference type="Pfam" id="PF06831">
    <property type="entry name" value="H2TH"/>
    <property type="match status" value="1"/>
</dbReference>
<dbReference type="SMART" id="SM00898">
    <property type="entry name" value="Fapy_DNA_glyco"/>
    <property type="match status" value="1"/>
</dbReference>
<dbReference type="SMART" id="SM01232">
    <property type="entry name" value="H2TH"/>
    <property type="match status" value="1"/>
</dbReference>
<dbReference type="SUPFAM" id="SSF57716">
    <property type="entry name" value="Glucocorticoid receptor-like (DNA-binding domain)"/>
    <property type="match status" value="1"/>
</dbReference>
<dbReference type="SUPFAM" id="SSF81624">
    <property type="entry name" value="N-terminal domain of MutM-like DNA repair proteins"/>
    <property type="match status" value="1"/>
</dbReference>
<dbReference type="SUPFAM" id="SSF46946">
    <property type="entry name" value="S13-like H2TH domain"/>
    <property type="match status" value="1"/>
</dbReference>
<dbReference type="PROSITE" id="PS51068">
    <property type="entry name" value="FPG_CAT"/>
    <property type="match status" value="1"/>
</dbReference>
<dbReference type="PROSITE" id="PS51066">
    <property type="entry name" value="ZF_FPG_2"/>
    <property type="match status" value="1"/>
</dbReference>
<gene>
    <name evidence="2" type="primary">mutM</name>
    <name evidence="2" type="synonym">fpg</name>
    <name type="ordered locus">Dshi_3369</name>
</gene>
<comment type="function">
    <text evidence="2">Involved in base excision repair of DNA damaged by oxidation or by mutagenic agents. Acts as a DNA glycosylase that recognizes and removes damaged bases. Has a preference for oxidized purines, such as 7,8-dihydro-8-oxoguanine (8-oxoG). Has AP (apurinic/apyrimidinic) lyase activity and introduces nicks in the DNA strand. Cleaves the DNA backbone by beta-delta elimination to generate a single-strand break at the site of the removed base with both 3'- and 5'-phosphates.</text>
</comment>
<comment type="catalytic activity">
    <reaction evidence="2">
        <text>Hydrolysis of DNA containing ring-opened 7-methylguanine residues, releasing 2,6-diamino-4-hydroxy-5-(N-methyl)formamidopyrimidine.</text>
        <dbReference type="EC" id="3.2.2.23"/>
    </reaction>
</comment>
<comment type="catalytic activity">
    <reaction evidence="2">
        <text>2'-deoxyribonucleotide-(2'-deoxyribose 5'-phosphate)-2'-deoxyribonucleotide-DNA = a 3'-end 2'-deoxyribonucleotide-(2,3-dehydro-2,3-deoxyribose 5'-phosphate)-DNA + a 5'-end 5'-phospho-2'-deoxyribonucleoside-DNA + H(+)</text>
        <dbReference type="Rhea" id="RHEA:66592"/>
        <dbReference type="Rhea" id="RHEA-COMP:13180"/>
        <dbReference type="Rhea" id="RHEA-COMP:16897"/>
        <dbReference type="Rhea" id="RHEA-COMP:17067"/>
        <dbReference type="ChEBI" id="CHEBI:15378"/>
        <dbReference type="ChEBI" id="CHEBI:136412"/>
        <dbReference type="ChEBI" id="CHEBI:157695"/>
        <dbReference type="ChEBI" id="CHEBI:167181"/>
        <dbReference type="EC" id="4.2.99.18"/>
    </reaction>
</comment>
<comment type="cofactor">
    <cofactor evidence="2">
        <name>Zn(2+)</name>
        <dbReference type="ChEBI" id="CHEBI:29105"/>
    </cofactor>
    <text evidence="2">Binds 1 zinc ion per subunit.</text>
</comment>
<comment type="subunit">
    <text evidence="2">Monomer.</text>
</comment>
<comment type="similarity">
    <text evidence="2">Belongs to the FPG family.</text>
</comment>
<feature type="initiator methionine" description="Removed" evidence="1">
    <location>
        <position position="1"/>
    </location>
</feature>
<feature type="chain" id="PRO_1000075696" description="Formamidopyrimidine-DNA glycosylase">
    <location>
        <begin position="2"/>
        <end position="284"/>
    </location>
</feature>
<feature type="zinc finger region" description="FPG-type" evidence="2">
    <location>
        <begin position="248"/>
        <end position="284"/>
    </location>
</feature>
<feature type="active site" description="Schiff-base intermediate with DNA" evidence="2">
    <location>
        <position position="2"/>
    </location>
</feature>
<feature type="active site" description="Proton donor" evidence="2">
    <location>
        <position position="3"/>
    </location>
</feature>
<feature type="active site" description="Proton donor; for beta-elimination activity" evidence="2">
    <location>
        <position position="58"/>
    </location>
</feature>
<feature type="active site" description="Proton donor; for delta-elimination activity" evidence="2">
    <location>
        <position position="274"/>
    </location>
</feature>
<feature type="binding site" evidence="2">
    <location>
        <position position="101"/>
    </location>
    <ligand>
        <name>DNA</name>
        <dbReference type="ChEBI" id="CHEBI:16991"/>
    </ligand>
</feature>
<feature type="binding site" evidence="2">
    <location>
        <position position="120"/>
    </location>
    <ligand>
        <name>DNA</name>
        <dbReference type="ChEBI" id="CHEBI:16991"/>
    </ligand>
</feature>
<feature type="binding site" evidence="2">
    <location>
        <position position="163"/>
    </location>
    <ligand>
        <name>DNA</name>
        <dbReference type="ChEBI" id="CHEBI:16991"/>
    </ligand>
</feature>
<evidence type="ECO:0000250" key="1"/>
<evidence type="ECO:0000255" key="2">
    <source>
        <dbReference type="HAMAP-Rule" id="MF_00103"/>
    </source>
</evidence>
<name>FPG_DINSH</name>
<reference key="1">
    <citation type="journal article" date="2010" name="ISME J.">
        <title>The complete genome sequence of the algal symbiont Dinoroseobacter shibae: a hitchhiker's guide to life in the sea.</title>
        <authorList>
            <person name="Wagner-Dobler I."/>
            <person name="Ballhausen B."/>
            <person name="Berger M."/>
            <person name="Brinkhoff T."/>
            <person name="Buchholz I."/>
            <person name="Bunk B."/>
            <person name="Cypionka H."/>
            <person name="Daniel R."/>
            <person name="Drepper T."/>
            <person name="Gerdts G."/>
            <person name="Hahnke S."/>
            <person name="Han C."/>
            <person name="Jahn D."/>
            <person name="Kalhoefer D."/>
            <person name="Kiss H."/>
            <person name="Klenk H.P."/>
            <person name="Kyrpides N."/>
            <person name="Liebl W."/>
            <person name="Liesegang H."/>
            <person name="Meincke L."/>
            <person name="Pati A."/>
            <person name="Petersen J."/>
            <person name="Piekarski T."/>
            <person name="Pommerenke C."/>
            <person name="Pradella S."/>
            <person name="Pukall R."/>
            <person name="Rabus R."/>
            <person name="Stackebrandt E."/>
            <person name="Thole S."/>
            <person name="Thompson L."/>
            <person name="Tielen P."/>
            <person name="Tomasch J."/>
            <person name="von Jan M."/>
            <person name="Wanphrut N."/>
            <person name="Wichels A."/>
            <person name="Zech H."/>
            <person name="Simon M."/>
        </authorList>
    </citation>
    <scope>NUCLEOTIDE SEQUENCE [LARGE SCALE GENOMIC DNA]</scope>
    <source>
        <strain>DSM 16493 / NCIMB 14021 / DFL 12</strain>
    </source>
</reference>
<accession>A8LNK8</accession>
<keyword id="KW-0227">DNA damage</keyword>
<keyword id="KW-0234">DNA repair</keyword>
<keyword id="KW-0238">DNA-binding</keyword>
<keyword id="KW-0326">Glycosidase</keyword>
<keyword id="KW-0378">Hydrolase</keyword>
<keyword id="KW-0456">Lyase</keyword>
<keyword id="KW-0479">Metal-binding</keyword>
<keyword id="KW-0511">Multifunctional enzyme</keyword>
<keyword id="KW-1185">Reference proteome</keyword>
<keyword id="KW-0862">Zinc</keyword>
<keyword id="KW-0863">Zinc-finger</keyword>
<organism>
    <name type="scientific">Dinoroseobacter shibae (strain DSM 16493 / NCIMB 14021 / DFL 12)</name>
    <dbReference type="NCBI Taxonomy" id="398580"/>
    <lineage>
        <taxon>Bacteria</taxon>
        <taxon>Pseudomonadati</taxon>
        <taxon>Pseudomonadota</taxon>
        <taxon>Alphaproteobacteria</taxon>
        <taxon>Rhodobacterales</taxon>
        <taxon>Roseobacteraceae</taxon>
        <taxon>Dinoroseobacter</taxon>
    </lineage>
</organism>